<keyword id="KW-0328">Glycosyltransferase</keyword>
<keyword id="KW-0448">Lipopolysaccharide biosynthesis</keyword>
<keyword id="KW-1185">Reference proteome</keyword>
<keyword id="KW-0808">Transferase</keyword>
<evidence type="ECO:0000305" key="1"/>
<organism>
    <name type="scientific">Rhizobium meliloti (strain 1021)</name>
    <name type="common">Ensifer meliloti</name>
    <name type="synonym">Sinorhizobium meliloti</name>
    <dbReference type="NCBI Taxonomy" id="266834"/>
    <lineage>
        <taxon>Bacteria</taxon>
        <taxon>Pseudomonadati</taxon>
        <taxon>Pseudomonadota</taxon>
        <taxon>Alphaproteobacteria</taxon>
        <taxon>Hyphomicrobiales</taxon>
        <taxon>Rhizobiaceae</taxon>
        <taxon>Sinorhizobium/Ensifer group</taxon>
        <taxon>Sinorhizobium</taxon>
    </lineage>
</organism>
<reference key="1">
    <citation type="journal article" date="2001" name="J. Bacteriol.">
        <title>Genetic characterization of a Sinorhizobium meliloti chromosomal region involved in lipopolysaccharide biosynthesis.</title>
        <authorList>
            <person name="Lagares A."/>
            <person name="Hozbor D.F."/>
            <person name="Niehaus K."/>
            <person name="Pich Otero A.J.L."/>
            <person name="Lorenzen J."/>
            <person name="Arnold W."/>
            <person name="Puehler A."/>
        </authorList>
    </citation>
    <scope>NUCLEOTIDE SEQUENCE [GENOMIC DNA]</scope>
    <source>
        <strain>RCR2011 / SU47</strain>
    </source>
</reference>
<reference key="2">
    <citation type="journal article" date="2001" name="Proc. Natl. Acad. Sci. U.S.A.">
        <title>Analysis of the chromosome sequence of the legume symbiont Sinorhizobium meliloti strain 1021.</title>
        <authorList>
            <person name="Capela D."/>
            <person name="Barloy-Hubler F."/>
            <person name="Gouzy J."/>
            <person name="Bothe G."/>
            <person name="Ampe F."/>
            <person name="Batut J."/>
            <person name="Boistard P."/>
            <person name="Becker A."/>
            <person name="Boutry M."/>
            <person name="Cadieu E."/>
            <person name="Dreano S."/>
            <person name="Gloux S."/>
            <person name="Godrie T."/>
            <person name="Goffeau A."/>
            <person name="Kahn D."/>
            <person name="Kiss E."/>
            <person name="Lelaure V."/>
            <person name="Masuy D."/>
            <person name="Pohl T."/>
            <person name="Portetelle D."/>
            <person name="Puehler A."/>
            <person name="Purnelle B."/>
            <person name="Ramsperger U."/>
            <person name="Renard C."/>
            <person name="Thebault P."/>
            <person name="Vandenbol M."/>
            <person name="Weidner S."/>
            <person name="Galibert F."/>
        </authorList>
    </citation>
    <scope>NUCLEOTIDE SEQUENCE [LARGE SCALE GENOMIC DNA]</scope>
    <source>
        <strain>1021</strain>
    </source>
</reference>
<reference key="3">
    <citation type="journal article" date="2001" name="Science">
        <title>The composite genome of the legume symbiont Sinorhizobium meliloti.</title>
        <authorList>
            <person name="Galibert F."/>
            <person name="Finan T.M."/>
            <person name="Long S.R."/>
            <person name="Puehler A."/>
            <person name="Abola P."/>
            <person name="Ampe F."/>
            <person name="Barloy-Hubler F."/>
            <person name="Barnett M.J."/>
            <person name="Becker A."/>
            <person name="Boistard P."/>
            <person name="Bothe G."/>
            <person name="Boutry M."/>
            <person name="Bowser L."/>
            <person name="Buhrmester J."/>
            <person name="Cadieu E."/>
            <person name="Capela D."/>
            <person name="Chain P."/>
            <person name="Cowie A."/>
            <person name="Davis R.W."/>
            <person name="Dreano S."/>
            <person name="Federspiel N.A."/>
            <person name="Fisher R.F."/>
            <person name="Gloux S."/>
            <person name="Godrie T."/>
            <person name="Goffeau A."/>
            <person name="Golding B."/>
            <person name="Gouzy J."/>
            <person name="Gurjal M."/>
            <person name="Hernandez-Lucas I."/>
            <person name="Hong A."/>
            <person name="Huizar L."/>
            <person name="Hyman R.W."/>
            <person name="Jones T."/>
            <person name="Kahn D."/>
            <person name="Kahn M.L."/>
            <person name="Kalman S."/>
            <person name="Keating D.H."/>
            <person name="Kiss E."/>
            <person name="Komp C."/>
            <person name="Lelaure V."/>
            <person name="Masuy D."/>
            <person name="Palm C."/>
            <person name="Peck M.C."/>
            <person name="Pohl T.M."/>
            <person name="Portetelle D."/>
            <person name="Purnelle B."/>
            <person name="Ramsperger U."/>
            <person name="Surzycki R."/>
            <person name="Thebault P."/>
            <person name="Vandenbol M."/>
            <person name="Vorhoelter F.J."/>
            <person name="Weidner S."/>
            <person name="Wells D.H."/>
            <person name="Wong K."/>
            <person name="Yeh K.-C."/>
            <person name="Batut J."/>
        </authorList>
    </citation>
    <scope>NUCLEOTIDE SEQUENCE [LARGE SCALE GENOMIC DNA]</scope>
    <source>
        <strain>1021</strain>
    </source>
</reference>
<name>LPSE_RHIME</name>
<sequence length="340" mass="38037">MKVTHFHFGKDGGAERFFVHLVNALAERGVEQTAIIRPGRGWRRDIEGAAKIRESHFRNLSLDRILLPLKVKHMARREKPDVLMAWAPRASELMPNYKGAFKISRLGDYPTRLSYFRNTDCIVCNTPGIAERVSDLGWKREIRVISNFTGTGRVVAVDRAKLDTPADAPVVMSMGRFVERKGFHTLIEAVARLPGVYLWLLGDGEERDNLHKLATDLGVSGRVRFAGWQDDTRPFLAAVDVFVMSSSHEPLGNVILESWAQGTPVVSTRSEGPQWFMRDGENGLMVDIGDAEGFARAIEQIVADNSLRTRLAERGHETLVGQFSREAITDAYLQLLASKP</sequence>
<proteinExistence type="inferred from homology"/>
<feature type="chain" id="PRO_0000080299" description="Lipopolysaccharide core biosynthesis glycosyltransferase LpsE">
    <location>
        <begin position="1"/>
        <end position="340"/>
    </location>
</feature>
<comment type="pathway">
    <text>Bacterial outer membrane biogenesis; LPS core biosynthesis.</text>
</comment>
<comment type="similarity">
    <text evidence="1">Belongs to the glycosyltransferase group 1 family. Glycosyltransferase 4 subfamily.</text>
</comment>
<protein>
    <recommendedName>
        <fullName>Lipopolysaccharide core biosynthesis glycosyltransferase LpsE</fullName>
        <ecNumber>2.4.-.-</ecNumber>
    </recommendedName>
</protein>
<accession>Q9R9N1</accession>
<gene>
    <name type="primary">lpsE</name>
    <name type="ordered locus">R01571</name>
    <name type="ORF">SMc01220</name>
</gene>
<dbReference type="EC" id="2.4.-.-"/>
<dbReference type="EMBL" id="AF193023">
    <property type="protein sequence ID" value="AAF06009.1"/>
    <property type="molecule type" value="Genomic_DNA"/>
</dbReference>
<dbReference type="EMBL" id="AL591688">
    <property type="protein sequence ID" value="CAC46150.1"/>
    <property type="molecule type" value="Genomic_DNA"/>
</dbReference>
<dbReference type="RefSeq" id="NP_385677.1">
    <property type="nucleotide sequence ID" value="NC_003047.1"/>
</dbReference>
<dbReference type="RefSeq" id="WP_010969311.1">
    <property type="nucleotide sequence ID" value="NC_003047.1"/>
</dbReference>
<dbReference type="SMR" id="Q9R9N1"/>
<dbReference type="CAZy" id="GT4">
    <property type="family name" value="Glycosyltransferase Family 4"/>
</dbReference>
<dbReference type="EnsemblBacteria" id="CAC46150">
    <property type="protein sequence ID" value="CAC46150"/>
    <property type="gene ID" value="SMc01220"/>
</dbReference>
<dbReference type="KEGG" id="sme:SMc01220"/>
<dbReference type="PATRIC" id="fig|266834.11.peg.2997"/>
<dbReference type="eggNOG" id="COG0438">
    <property type="taxonomic scope" value="Bacteria"/>
</dbReference>
<dbReference type="HOGENOM" id="CLU_009583_0_3_5"/>
<dbReference type="OrthoDB" id="529131at2"/>
<dbReference type="UniPathway" id="UPA00958"/>
<dbReference type="Proteomes" id="UP000001976">
    <property type="component" value="Chromosome"/>
</dbReference>
<dbReference type="GO" id="GO:0016757">
    <property type="term" value="F:glycosyltransferase activity"/>
    <property type="evidence" value="ECO:0007669"/>
    <property type="project" value="UniProtKB-KW"/>
</dbReference>
<dbReference type="GO" id="GO:0009244">
    <property type="term" value="P:lipopolysaccharide core region biosynthetic process"/>
    <property type="evidence" value="ECO:0007669"/>
    <property type="project" value="UniProtKB-UniPathway"/>
</dbReference>
<dbReference type="CDD" id="cd03811">
    <property type="entry name" value="GT4_GT28_WabH-like"/>
    <property type="match status" value="1"/>
</dbReference>
<dbReference type="Gene3D" id="3.40.50.2000">
    <property type="entry name" value="Glycogen Phosphorylase B"/>
    <property type="match status" value="2"/>
</dbReference>
<dbReference type="InterPro" id="IPR001296">
    <property type="entry name" value="Glyco_trans_1"/>
</dbReference>
<dbReference type="InterPro" id="IPR028098">
    <property type="entry name" value="Glyco_trans_4-like_N"/>
</dbReference>
<dbReference type="PANTHER" id="PTHR12526">
    <property type="entry name" value="GLYCOSYLTRANSFERASE"/>
    <property type="match status" value="1"/>
</dbReference>
<dbReference type="Pfam" id="PF13439">
    <property type="entry name" value="Glyco_transf_4"/>
    <property type="match status" value="1"/>
</dbReference>
<dbReference type="Pfam" id="PF00534">
    <property type="entry name" value="Glycos_transf_1"/>
    <property type="match status" value="1"/>
</dbReference>
<dbReference type="SUPFAM" id="SSF53756">
    <property type="entry name" value="UDP-Glycosyltransferase/glycogen phosphorylase"/>
    <property type="match status" value="1"/>
</dbReference>